<accession>Q8LLV8</accession>
<feature type="chain" id="PRO_0000429317" description="Peptide POLARIS">
    <location>
        <begin position="1"/>
        <end position="36"/>
    </location>
</feature>
<name>PLS_ARATH</name>
<sequence length="36" mass="4390">MKPRLCFNFRRRSISPCYISISYLLVAKLFKLFKIH</sequence>
<proteinExistence type="evidence at transcript level"/>
<comment type="function">
    <text evidence="2 3 5">Required for correct root growth and vascular development, probably by modulating both cell division rate in meristems and cell elongation in roots. Negative regulator of the ethylene signaling pathway that modulates microtubule cytoskeleton dynamics and auxin transport and homeostasis, and possibly cytokinin signaling, thus influencing root growth and lateral root development.</text>
</comment>
<comment type="tissue specificity">
    <text evidence="1 2 4 5">Mostly expressed in the embryonic root from the heart stage and in the seedling primary and lateral root tips, especially in the columella initials and lateral root cap. Also detectable in aerial parts of the seedling, sepals and leaves, principally in vascular tissues of the lamina and petiole.</text>
</comment>
<comment type="developmental stage">
    <text evidence="4">First observed in embryos from the heart stage and throughout embryo development, restricted to the basal part, constituting the developing radicle. During the curled cotyledonary stage, strongly expressed in the radicle and detectable in the cotyledons. On germination, mostly present in root tips, but also at low levels in the cotyledons and hypocotyl. In flowering plants, restricted to the root tip and to the silique wall.</text>
</comment>
<comment type="induction">
    <text evidence="2 3 5">Repressed by ethylene (ACC) and cytokinin, but induced by auxin (1-NAA and 2,4-D).</text>
</comment>
<comment type="disruption phenotype">
    <text evidence="2 3">Defective in root growth and leaf vascularization, characterized by more anchor roots at the root-hypocotyl junction. Cells of the root meristem and the cortex of the primary root are short and more radially expanded. Reduced meristem cell divisions in meristems and reduced axial cell elongation in roots. Enhanced ethylene-response, hyperresponsiveness to cytokinin, defective auxin transport and homeostasis, and altered microtubule sensitivity to inhibitors.</text>
</comment>
<comment type="similarity">
    <text evidence="6">Belongs to the POLARIS peptide family.</text>
</comment>
<evidence type="ECO:0000269" key="1">
    <source>
    </source>
</evidence>
<evidence type="ECO:0000269" key="2">
    <source>
    </source>
</evidence>
<evidence type="ECO:0000269" key="3">
    <source>
    </source>
</evidence>
<evidence type="ECO:0000269" key="4">
    <source>
    </source>
</evidence>
<evidence type="ECO:0000269" key="5">
    <source>
    </source>
</evidence>
<evidence type="ECO:0000305" key="6"/>
<gene>
    <name type="primary">PLS</name>
    <name type="synonym">EM101</name>
    <name type="ordered locus">At4g39403</name>
    <name type="ORF">F23K16</name>
</gene>
<keyword id="KW-0927">Auxin signaling pathway</keyword>
<keyword id="KW-0932">Cytokinin signaling pathway</keyword>
<keyword id="KW-0217">Developmental protein</keyword>
<keyword id="KW-0936">Ethylene signaling pathway</keyword>
<keyword id="KW-1185">Reference proteome</keyword>
<reference key="1">
    <citation type="journal article" date="2002" name="Plant Cell">
        <title>The POLARIS gene of Arabidopsis encodes a predicted peptide required for correct root growth and leaf vascular patterning.</title>
        <authorList>
            <person name="Casson S.A."/>
            <person name="Chilley P.M."/>
            <person name="Topping J.F."/>
            <person name="Evans I.M."/>
            <person name="Souter M.A."/>
            <person name="Lindsey K."/>
        </authorList>
    </citation>
    <scope>NUCLEOTIDE SEQUENCE [MRNA]</scope>
    <scope>FUNCTION</scope>
    <scope>DISRUPTION PHENOTYPE</scope>
    <scope>TISSUE SPECIFICITY</scope>
    <scope>INDUCTION BY ETHYLENE AND AUXIN</scope>
    <source>
        <strain>cv. C24</strain>
        <strain>cv. Columbia</strain>
    </source>
</reference>
<reference key="2">
    <citation type="journal article" date="1999" name="Nature">
        <title>Sequence and analysis of chromosome 4 of the plant Arabidopsis thaliana.</title>
        <authorList>
            <person name="Mayer K.F.X."/>
            <person name="Schueller C."/>
            <person name="Wambutt R."/>
            <person name="Murphy G."/>
            <person name="Volckaert G."/>
            <person name="Pohl T."/>
            <person name="Duesterhoeft A."/>
            <person name="Stiekema W."/>
            <person name="Entian K.-D."/>
            <person name="Terryn N."/>
            <person name="Harris B."/>
            <person name="Ansorge W."/>
            <person name="Brandt P."/>
            <person name="Grivell L.A."/>
            <person name="Rieger M."/>
            <person name="Weichselgartner M."/>
            <person name="de Simone V."/>
            <person name="Obermaier B."/>
            <person name="Mache R."/>
            <person name="Mueller M."/>
            <person name="Kreis M."/>
            <person name="Delseny M."/>
            <person name="Puigdomenech P."/>
            <person name="Watson M."/>
            <person name="Schmidtheini T."/>
            <person name="Reichert B."/>
            <person name="Portetelle D."/>
            <person name="Perez-Alonso M."/>
            <person name="Boutry M."/>
            <person name="Bancroft I."/>
            <person name="Vos P."/>
            <person name="Hoheisel J."/>
            <person name="Zimmermann W."/>
            <person name="Wedler H."/>
            <person name="Ridley P."/>
            <person name="Langham S.-A."/>
            <person name="McCullagh B."/>
            <person name="Bilham L."/>
            <person name="Robben J."/>
            <person name="van der Schueren J."/>
            <person name="Grymonprez B."/>
            <person name="Chuang Y.-J."/>
            <person name="Vandenbussche F."/>
            <person name="Braeken M."/>
            <person name="Weltjens I."/>
            <person name="Voet M."/>
            <person name="Bastiaens I."/>
            <person name="Aert R."/>
            <person name="Defoor E."/>
            <person name="Weitzenegger T."/>
            <person name="Bothe G."/>
            <person name="Ramsperger U."/>
            <person name="Hilbert H."/>
            <person name="Braun M."/>
            <person name="Holzer E."/>
            <person name="Brandt A."/>
            <person name="Peters S."/>
            <person name="van Staveren M."/>
            <person name="Dirkse W."/>
            <person name="Mooijman P."/>
            <person name="Klein Lankhorst R."/>
            <person name="Rose M."/>
            <person name="Hauf J."/>
            <person name="Koetter P."/>
            <person name="Berneiser S."/>
            <person name="Hempel S."/>
            <person name="Feldpausch M."/>
            <person name="Lamberth S."/>
            <person name="Van den Daele H."/>
            <person name="De Keyser A."/>
            <person name="Buysshaert C."/>
            <person name="Gielen J."/>
            <person name="Villarroel R."/>
            <person name="De Clercq R."/>
            <person name="van Montagu M."/>
            <person name="Rogers J."/>
            <person name="Cronin A."/>
            <person name="Quail M.A."/>
            <person name="Bray-Allen S."/>
            <person name="Clark L."/>
            <person name="Doggett J."/>
            <person name="Hall S."/>
            <person name="Kay M."/>
            <person name="Lennard N."/>
            <person name="McLay K."/>
            <person name="Mayes R."/>
            <person name="Pettett A."/>
            <person name="Rajandream M.A."/>
            <person name="Lyne M."/>
            <person name="Benes V."/>
            <person name="Rechmann S."/>
            <person name="Borkova D."/>
            <person name="Bloecker H."/>
            <person name="Scharfe M."/>
            <person name="Grimm M."/>
            <person name="Loehnert T.-H."/>
            <person name="Dose S."/>
            <person name="de Haan M."/>
            <person name="Maarse A.C."/>
            <person name="Schaefer M."/>
            <person name="Mueller-Auer S."/>
            <person name="Gabel C."/>
            <person name="Fuchs M."/>
            <person name="Fartmann B."/>
            <person name="Granderath K."/>
            <person name="Dauner D."/>
            <person name="Herzl A."/>
            <person name="Neumann S."/>
            <person name="Argiriou A."/>
            <person name="Vitale D."/>
            <person name="Liguori R."/>
            <person name="Piravandi E."/>
            <person name="Massenet O."/>
            <person name="Quigley F."/>
            <person name="Clabauld G."/>
            <person name="Muendlein A."/>
            <person name="Felber R."/>
            <person name="Schnabl S."/>
            <person name="Hiller R."/>
            <person name="Schmidt W."/>
            <person name="Lecharny A."/>
            <person name="Aubourg S."/>
            <person name="Chefdor F."/>
            <person name="Cooke R."/>
            <person name="Berger C."/>
            <person name="Monfort A."/>
            <person name="Casacuberta E."/>
            <person name="Gibbons T."/>
            <person name="Weber N."/>
            <person name="Vandenbol M."/>
            <person name="Bargues M."/>
            <person name="Terol J."/>
            <person name="Torres A."/>
            <person name="Perez-Perez A."/>
            <person name="Purnelle B."/>
            <person name="Bent E."/>
            <person name="Johnson S."/>
            <person name="Tacon D."/>
            <person name="Jesse T."/>
            <person name="Heijnen L."/>
            <person name="Schwarz S."/>
            <person name="Scholler P."/>
            <person name="Heber S."/>
            <person name="Francs P."/>
            <person name="Bielke C."/>
            <person name="Frishman D."/>
            <person name="Haase D."/>
            <person name="Lemcke K."/>
            <person name="Mewes H.-W."/>
            <person name="Stocker S."/>
            <person name="Zaccaria P."/>
            <person name="Bevan M."/>
            <person name="Wilson R.K."/>
            <person name="de la Bastide M."/>
            <person name="Habermann K."/>
            <person name="Parnell L."/>
            <person name="Dedhia N."/>
            <person name="Gnoj L."/>
            <person name="Schutz K."/>
            <person name="Huang E."/>
            <person name="Spiegel L."/>
            <person name="Sekhon M."/>
            <person name="Murray J."/>
            <person name="Sheet P."/>
            <person name="Cordes M."/>
            <person name="Abu-Threideh J."/>
            <person name="Stoneking T."/>
            <person name="Kalicki J."/>
            <person name="Graves T."/>
            <person name="Harmon G."/>
            <person name="Edwards J."/>
            <person name="Latreille P."/>
            <person name="Courtney L."/>
            <person name="Cloud J."/>
            <person name="Abbott A."/>
            <person name="Scott K."/>
            <person name="Johnson D."/>
            <person name="Minx P."/>
            <person name="Bentley D."/>
            <person name="Fulton B."/>
            <person name="Miller N."/>
            <person name="Greco T."/>
            <person name="Kemp K."/>
            <person name="Kramer J."/>
            <person name="Fulton L."/>
            <person name="Mardis E."/>
            <person name="Dante M."/>
            <person name="Pepin K."/>
            <person name="Hillier L.W."/>
            <person name="Nelson J."/>
            <person name="Spieth J."/>
            <person name="Ryan E."/>
            <person name="Andrews S."/>
            <person name="Geisel C."/>
            <person name="Layman D."/>
            <person name="Du H."/>
            <person name="Ali J."/>
            <person name="Berghoff A."/>
            <person name="Jones K."/>
            <person name="Drone K."/>
            <person name="Cotton M."/>
            <person name="Joshu C."/>
            <person name="Antonoiu B."/>
            <person name="Zidanic M."/>
            <person name="Strong C."/>
            <person name="Sun H."/>
            <person name="Lamar B."/>
            <person name="Yordan C."/>
            <person name="Ma P."/>
            <person name="Zhong J."/>
            <person name="Preston R."/>
            <person name="Vil D."/>
            <person name="Shekher M."/>
            <person name="Matero A."/>
            <person name="Shah R."/>
            <person name="Swaby I.K."/>
            <person name="O'Shaughnessy A."/>
            <person name="Rodriguez M."/>
            <person name="Hoffman J."/>
            <person name="Till S."/>
            <person name="Granat S."/>
            <person name="Shohdy N."/>
            <person name="Hasegawa A."/>
            <person name="Hameed A."/>
            <person name="Lodhi M."/>
            <person name="Johnson A."/>
            <person name="Chen E."/>
            <person name="Marra M.A."/>
            <person name="Martienssen R."/>
            <person name="McCombie W.R."/>
        </authorList>
    </citation>
    <scope>NUCLEOTIDE SEQUENCE [LARGE SCALE GENOMIC DNA]</scope>
    <source>
        <strain>cv. Columbia</strain>
    </source>
</reference>
<reference key="3">
    <citation type="journal article" date="2017" name="Plant J.">
        <title>Araport11: a complete reannotation of the Arabidopsis thaliana reference genome.</title>
        <authorList>
            <person name="Cheng C.Y."/>
            <person name="Krishnakumar V."/>
            <person name="Chan A.P."/>
            <person name="Thibaud-Nissen F."/>
            <person name="Schobel S."/>
            <person name="Town C.D."/>
        </authorList>
    </citation>
    <scope>GENOME REANNOTATION</scope>
    <source>
        <strain>cv. Columbia</strain>
    </source>
</reference>
<reference key="4">
    <citation type="journal article" date="1994" name="Plant J.">
        <title>Identification of molecular markers of embryogenesis in Arabidopsis thaliana by promoter trapping.</title>
        <authorList>
            <person name="Topping J.F."/>
            <person name="Agyeman F."/>
            <person name="Henricot B."/>
            <person name="Lindsey K."/>
        </authorList>
    </citation>
    <scope>IDENTIFICATION</scope>
    <scope>TISSUE SPECIFICITY</scope>
    <scope>DEVELOPMENTAL STAGE</scope>
</reference>
<reference key="5">
    <citation type="journal article" date="1997" name="Plant Cell">
        <title>Promoter trap markers differentiate structural and positional components of polar development in Arabidopsis.</title>
        <authorList>
            <person name="Topping J.F."/>
            <person name="Lindsey K."/>
        </authorList>
    </citation>
    <scope>FUNCTION</scope>
    <scope>TISSUE SPECIFICITY</scope>
    <scope>INDUCTION BY AUXIN AND CYTOKININ</scope>
    <source>
        <strain>cv. C24</strain>
    </source>
</reference>
<reference key="6">
    <citation type="journal article" date="1998" name="Symp. Soc. Exp. Biol.">
        <title>Dissecting embryonic and seedling morphogenesis in Arabidopsis by promoter trap insertional mutagenesis.</title>
        <authorList>
            <person name="Lindsey K."/>
            <person name="Topping J.F."/>
            <person name="Muskett P.R."/>
            <person name="Wei W."/>
            <person name="Horne K.L."/>
        </authorList>
    </citation>
    <scope>TISSUE SPECIFICITY</scope>
</reference>
<reference key="7">
    <citation type="journal article" date="2006" name="Plant Cell">
        <title>The POLARIS peptide of Arabidopsis regulates auxin transport and root growth via effects on ethylene signaling.</title>
        <authorList>
            <person name="Chilley P.M."/>
            <person name="Casson S.A."/>
            <person name="Tarkowski P."/>
            <person name="Hawkins N."/>
            <person name="Wang K.L."/>
            <person name="Hussey P.J."/>
            <person name="Beale M."/>
            <person name="Ecker J.R."/>
            <person name="Sandberg G.K."/>
            <person name="Lindsey K."/>
        </authorList>
    </citation>
    <scope>FUNCTION</scope>
    <scope>DISRUPTION PHENOTYPE</scope>
    <scope>INDUCTION BY ETHYLENE AND AUXIN</scope>
    <source>
        <strain>cv. C24</strain>
    </source>
</reference>
<reference key="8">
    <citation type="journal article" date="2013" name="Front. Plant Sci.">
        <title>Interaction of PLS and PIN and hormonal crosstalk in Arabidopsis root development.</title>
        <authorList>
            <person name="Liu J."/>
            <person name="Mehdi S."/>
            <person name="Topping J."/>
            <person name="Friml J."/>
            <person name="Lindsey K."/>
        </authorList>
    </citation>
    <scope>REVIEW ON ROOT DEVELOPMENT</scope>
</reference>
<dbReference type="EMBL" id="AF285768">
    <property type="protein sequence ID" value="AAM47153.1"/>
    <property type="molecule type" value="mRNA"/>
</dbReference>
<dbReference type="EMBL" id="AL078620">
    <property type="status" value="NOT_ANNOTATED_CDS"/>
    <property type="molecule type" value="Genomic_DNA"/>
</dbReference>
<dbReference type="EMBL" id="CP002687">
    <property type="protein sequence ID" value="AEE87070.1"/>
    <property type="molecule type" value="Genomic_DNA"/>
</dbReference>
<dbReference type="RefSeq" id="NP_001031813.1">
    <property type="nucleotide sequence ID" value="NM_001036736.1"/>
</dbReference>
<dbReference type="STRING" id="3702.Q8LLV8"/>
<dbReference type="PaxDb" id="3702-AT4G39403.1"/>
<dbReference type="EnsemblPlants" id="AT4G39403.1">
    <property type="protein sequence ID" value="AT4G39403.1"/>
    <property type="gene ID" value="AT4G39403"/>
</dbReference>
<dbReference type="GeneID" id="3770598"/>
<dbReference type="Gramene" id="AT4G39403.1">
    <property type="protein sequence ID" value="AT4G39403.1"/>
    <property type="gene ID" value="AT4G39403"/>
</dbReference>
<dbReference type="KEGG" id="ath:AT4G39403"/>
<dbReference type="Araport" id="AT4G39403"/>
<dbReference type="TAIR" id="AT4G39403">
    <property type="gene designation" value="PLS"/>
</dbReference>
<dbReference type="HOGENOM" id="CLU_3360380_0_0_1"/>
<dbReference type="InParanoid" id="Q8LLV8"/>
<dbReference type="OrthoDB" id="1031742at2759"/>
<dbReference type="PRO" id="PR:Q8LLV8"/>
<dbReference type="Proteomes" id="UP000006548">
    <property type="component" value="Chromosome 4"/>
</dbReference>
<dbReference type="ExpressionAtlas" id="Q8LLV8">
    <property type="expression patterns" value="baseline and differential"/>
</dbReference>
<dbReference type="GO" id="GO:0009955">
    <property type="term" value="P:adaxial/abaxial pattern specification"/>
    <property type="evidence" value="ECO:0000315"/>
    <property type="project" value="TAIR"/>
</dbReference>
<dbReference type="GO" id="GO:0009926">
    <property type="term" value="P:auxin polar transport"/>
    <property type="evidence" value="ECO:0000315"/>
    <property type="project" value="TAIR"/>
</dbReference>
<dbReference type="GO" id="GO:0009734">
    <property type="term" value="P:auxin-activated signaling pathway"/>
    <property type="evidence" value="ECO:0007669"/>
    <property type="project" value="UniProtKB-KW"/>
</dbReference>
<dbReference type="GO" id="GO:0071365">
    <property type="term" value="P:cellular response to auxin stimulus"/>
    <property type="evidence" value="ECO:0000270"/>
    <property type="project" value="UniProtKB"/>
</dbReference>
<dbReference type="GO" id="GO:0071368">
    <property type="term" value="P:cellular response to cytokinin stimulus"/>
    <property type="evidence" value="ECO:0000270"/>
    <property type="project" value="UniProtKB"/>
</dbReference>
<dbReference type="GO" id="GO:0071369">
    <property type="term" value="P:cellular response to ethylene stimulus"/>
    <property type="evidence" value="ECO:0000270"/>
    <property type="project" value="UniProtKB"/>
</dbReference>
<dbReference type="GO" id="GO:0009736">
    <property type="term" value="P:cytokinin-activated signaling pathway"/>
    <property type="evidence" value="ECO:0007669"/>
    <property type="project" value="UniProtKB-KW"/>
</dbReference>
<dbReference type="GO" id="GO:0009873">
    <property type="term" value="P:ethylene-activated signaling pathway"/>
    <property type="evidence" value="ECO:0000315"/>
    <property type="project" value="TAIR"/>
</dbReference>
<dbReference type="GO" id="GO:0010105">
    <property type="term" value="P:negative regulation of ethylene-activated signaling pathway"/>
    <property type="evidence" value="ECO:0000315"/>
    <property type="project" value="UniProtKB"/>
</dbReference>
<dbReference type="GO" id="GO:0070507">
    <property type="term" value="P:regulation of microtubule cytoskeleton organization"/>
    <property type="evidence" value="ECO:0000315"/>
    <property type="project" value="UniProtKB"/>
</dbReference>
<dbReference type="GO" id="GO:0009733">
    <property type="term" value="P:response to auxin"/>
    <property type="evidence" value="ECO:0000315"/>
    <property type="project" value="TAIR"/>
</dbReference>
<dbReference type="GO" id="GO:0009735">
    <property type="term" value="P:response to cytokinin"/>
    <property type="evidence" value="ECO:0000315"/>
    <property type="project" value="TAIR"/>
</dbReference>
<dbReference type="GO" id="GO:0048364">
    <property type="term" value="P:root development"/>
    <property type="evidence" value="ECO:0000315"/>
    <property type="project" value="TAIR"/>
</dbReference>
<dbReference type="GO" id="GO:0010051">
    <property type="term" value="P:xylem and phloem pattern formation"/>
    <property type="evidence" value="ECO:0000315"/>
    <property type="project" value="TAIR"/>
</dbReference>
<protein>
    <recommendedName>
        <fullName>Peptide POLARIS</fullName>
    </recommendedName>
    <alternativeName>
        <fullName>Protein expressed in embryo 101</fullName>
        <shortName>AtEM101</shortName>
    </alternativeName>
</protein>
<organism>
    <name type="scientific">Arabidopsis thaliana</name>
    <name type="common">Mouse-ear cress</name>
    <dbReference type="NCBI Taxonomy" id="3702"/>
    <lineage>
        <taxon>Eukaryota</taxon>
        <taxon>Viridiplantae</taxon>
        <taxon>Streptophyta</taxon>
        <taxon>Embryophyta</taxon>
        <taxon>Tracheophyta</taxon>
        <taxon>Spermatophyta</taxon>
        <taxon>Magnoliopsida</taxon>
        <taxon>eudicotyledons</taxon>
        <taxon>Gunneridae</taxon>
        <taxon>Pentapetalae</taxon>
        <taxon>rosids</taxon>
        <taxon>malvids</taxon>
        <taxon>Brassicales</taxon>
        <taxon>Brassicaceae</taxon>
        <taxon>Camelineae</taxon>
        <taxon>Arabidopsis</taxon>
    </lineage>
</organism>